<protein>
    <recommendedName>
        <fullName evidence="1">SsrA-binding protein</fullName>
    </recommendedName>
    <alternativeName>
        <fullName evidence="1">Small protein B</fullName>
    </alternativeName>
</protein>
<sequence length="155" mass="17730">MAKGEGHILAQNKKARHDYHIVETVEAGIVLTGTEIKSVRAARIQLKDGFAQIKNGEAWLVNVHIAPFEQGNIWNADPERTRKLLLKKREITHLANELKGSGMTLVPLKVYLKDGFAKVLIGLAKGKHEYDKRETIKRRDQERDIKKQMKHYNAR</sequence>
<feature type="chain" id="PRO_1000002165" description="SsrA-binding protein">
    <location>
        <begin position="1"/>
        <end position="155"/>
    </location>
</feature>
<feature type="region of interest" description="Disordered" evidence="2">
    <location>
        <begin position="135"/>
        <end position="155"/>
    </location>
</feature>
<feature type="compositionally biased region" description="Basic and acidic residues" evidence="2">
    <location>
        <begin position="135"/>
        <end position="147"/>
    </location>
</feature>
<evidence type="ECO:0000255" key="1">
    <source>
        <dbReference type="HAMAP-Rule" id="MF_00023"/>
    </source>
</evidence>
<evidence type="ECO:0000256" key="2">
    <source>
        <dbReference type="SAM" id="MobiDB-lite"/>
    </source>
</evidence>
<keyword id="KW-0963">Cytoplasm</keyword>
<keyword id="KW-0694">RNA-binding</keyword>
<proteinExistence type="inferred from homology"/>
<comment type="function">
    <text evidence="1">Required for rescue of stalled ribosomes mediated by trans-translation. Binds to transfer-messenger RNA (tmRNA), required for stable association of tmRNA with ribosomes. tmRNA and SmpB together mimic tRNA shape, replacing the anticodon stem-loop with SmpB. tmRNA is encoded by the ssrA gene; the 2 termini fold to resemble tRNA(Ala) and it encodes a 'tag peptide', a short internal open reading frame. During trans-translation Ala-aminoacylated tmRNA acts like a tRNA, entering the A-site of stalled ribosomes, displacing the stalled mRNA. The ribosome then switches to translate the ORF on the tmRNA; the nascent peptide is terminated with the 'tag peptide' encoded by the tmRNA and targeted for degradation. The ribosome is freed to recommence translation, which seems to be the essential function of trans-translation.</text>
</comment>
<comment type="subcellular location">
    <subcellularLocation>
        <location evidence="1">Cytoplasm</location>
    </subcellularLocation>
    <text evidence="1">The tmRNA-SmpB complex associates with stalled 70S ribosomes.</text>
</comment>
<comment type="similarity">
    <text evidence="1">Belongs to the SmpB family.</text>
</comment>
<name>SSRP_STRPD</name>
<accession>Q1JI42</accession>
<gene>
    <name evidence="1" type="primary">smpB</name>
    <name type="ordered locus">MGAS10270_Spy0416</name>
</gene>
<reference key="1">
    <citation type="journal article" date="2006" name="Proc. Natl. Acad. Sci. U.S.A.">
        <title>Molecular genetic anatomy of inter- and intraserotype variation in the human bacterial pathogen group A Streptococcus.</title>
        <authorList>
            <person name="Beres S.B."/>
            <person name="Richter E.W."/>
            <person name="Nagiec M.J."/>
            <person name="Sumby P."/>
            <person name="Porcella S.F."/>
            <person name="DeLeo F.R."/>
            <person name="Musser J.M."/>
        </authorList>
    </citation>
    <scope>NUCLEOTIDE SEQUENCE [LARGE SCALE GENOMIC DNA]</scope>
    <source>
        <strain>MGAS10270</strain>
    </source>
</reference>
<dbReference type="EMBL" id="CP000260">
    <property type="protein sequence ID" value="ABF33481.1"/>
    <property type="molecule type" value="Genomic_DNA"/>
</dbReference>
<dbReference type="RefSeq" id="WP_002994152.1">
    <property type="nucleotide sequence ID" value="NZ_CVUH01000002.1"/>
</dbReference>
<dbReference type="SMR" id="Q1JI42"/>
<dbReference type="GeneID" id="69901269"/>
<dbReference type="KEGG" id="sph:MGAS10270_Spy0416"/>
<dbReference type="HOGENOM" id="CLU_108953_0_0_9"/>
<dbReference type="Proteomes" id="UP000002436">
    <property type="component" value="Chromosome"/>
</dbReference>
<dbReference type="GO" id="GO:0005829">
    <property type="term" value="C:cytosol"/>
    <property type="evidence" value="ECO:0007669"/>
    <property type="project" value="TreeGrafter"/>
</dbReference>
<dbReference type="GO" id="GO:0003723">
    <property type="term" value="F:RNA binding"/>
    <property type="evidence" value="ECO:0007669"/>
    <property type="project" value="UniProtKB-UniRule"/>
</dbReference>
<dbReference type="GO" id="GO:0070929">
    <property type="term" value="P:trans-translation"/>
    <property type="evidence" value="ECO:0007669"/>
    <property type="project" value="UniProtKB-UniRule"/>
</dbReference>
<dbReference type="CDD" id="cd09294">
    <property type="entry name" value="SmpB"/>
    <property type="match status" value="1"/>
</dbReference>
<dbReference type="Gene3D" id="2.40.280.10">
    <property type="match status" value="1"/>
</dbReference>
<dbReference type="HAMAP" id="MF_00023">
    <property type="entry name" value="SmpB"/>
    <property type="match status" value="1"/>
</dbReference>
<dbReference type="InterPro" id="IPR023620">
    <property type="entry name" value="SmpB"/>
</dbReference>
<dbReference type="InterPro" id="IPR000037">
    <property type="entry name" value="SsrA-bd_prot"/>
</dbReference>
<dbReference type="InterPro" id="IPR020081">
    <property type="entry name" value="SsrA-bd_prot_CS"/>
</dbReference>
<dbReference type="NCBIfam" id="NF003843">
    <property type="entry name" value="PRK05422.1"/>
    <property type="match status" value="1"/>
</dbReference>
<dbReference type="NCBIfam" id="TIGR00086">
    <property type="entry name" value="smpB"/>
    <property type="match status" value="1"/>
</dbReference>
<dbReference type="PANTHER" id="PTHR30308:SF2">
    <property type="entry name" value="SSRA-BINDING PROTEIN"/>
    <property type="match status" value="1"/>
</dbReference>
<dbReference type="PANTHER" id="PTHR30308">
    <property type="entry name" value="TMRNA-BINDING COMPONENT OF TRANS-TRANSLATION TAGGING COMPLEX"/>
    <property type="match status" value="1"/>
</dbReference>
<dbReference type="Pfam" id="PF01668">
    <property type="entry name" value="SmpB"/>
    <property type="match status" value="1"/>
</dbReference>
<dbReference type="SUPFAM" id="SSF74982">
    <property type="entry name" value="Small protein B (SmpB)"/>
    <property type="match status" value="1"/>
</dbReference>
<dbReference type="PROSITE" id="PS01317">
    <property type="entry name" value="SSRP"/>
    <property type="match status" value="1"/>
</dbReference>
<organism>
    <name type="scientific">Streptococcus pyogenes serotype M2 (strain MGAS10270)</name>
    <dbReference type="NCBI Taxonomy" id="370552"/>
    <lineage>
        <taxon>Bacteria</taxon>
        <taxon>Bacillati</taxon>
        <taxon>Bacillota</taxon>
        <taxon>Bacilli</taxon>
        <taxon>Lactobacillales</taxon>
        <taxon>Streptococcaceae</taxon>
        <taxon>Streptococcus</taxon>
    </lineage>
</organism>